<organism>
    <name type="scientific">Burkholderia orbicola (strain AU 1054)</name>
    <dbReference type="NCBI Taxonomy" id="331271"/>
    <lineage>
        <taxon>Bacteria</taxon>
        <taxon>Pseudomonadati</taxon>
        <taxon>Pseudomonadota</taxon>
        <taxon>Betaproteobacteria</taxon>
        <taxon>Burkholderiales</taxon>
        <taxon>Burkholderiaceae</taxon>
        <taxon>Burkholderia</taxon>
        <taxon>Burkholderia cepacia complex</taxon>
        <taxon>Burkholderia orbicola</taxon>
    </lineage>
</organism>
<name>RL9_BURO1</name>
<proteinExistence type="inferred from homology"/>
<accession>Q1BH33</accession>
<evidence type="ECO:0000255" key="1">
    <source>
        <dbReference type="HAMAP-Rule" id="MF_00503"/>
    </source>
</evidence>
<evidence type="ECO:0000305" key="2"/>
<keyword id="KW-0687">Ribonucleoprotein</keyword>
<keyword id="KW-0689">Ribosomal protein</keyword>
<keyword id="KW-0694">RNA-binding</keyword>
<keyword id="KW-0699">rRNA-binding</keyword>
<comment type="function">
    <text evidence="1">Binds to the 23S rRNA.</text>
</comment>
<comment type="similarity">
    <text evidence="1">Belongs to the bacterial ribosomal protein bL9 family.</text>
</comment>
<gene>
    <name evidence="1" type="primary">rplI</name>
    <name type="ordered locus">Bcen_6208</name>
</gene>
<reference key="1">
    <citation type="submission" date="2006-05" db="EMBL/GenBank/DDBJ databases">
        <title>Complete sequence of chromosome 3 of Burkholderia cenocepacia AU 1054.</title>
        <authorList>
            <consortium name="US DOE Joint Genome Institute"/>
            <person name="Copeland A."/>
            <person name="Lucas S."/>
            <person name="Lapidus A."/>
            <person name="Barry K."/>
            <person name="Detter J.C."/>
            <person name="Glavina del Rio T."/>
            <person name="Hammon N."/>
            <person name="Israni S."/>
            <person name="Dalin E."/>
            <person name="Tice H."/>
            <person name="Pitluck S."/>
            <person name="Chain P."/>
            <person name="Malfatti S."/>
            <person name="Shin M."/>
            <person name="Vergez L."/>
            <person name="Schmutz J."/>
            <person name="Larimer F."/>
            <person name="Land M."/>
            <person name="Hauser L."/>
            <person name="Kyrpides N."/>
            <person name="Lykidis A."/>
            <person name="LiPuma J.J."/>
            <person name="Konstantinidis K."/>
            <person name="Tiedje J.M."/>
            <person name="Richardson P."/>
        </authorList>
    </citation>
    <scope>NUCLEOTIDE SEQUENCE [LARGE SCALE GENOMIC DNA]</scope>
    <source>
        <strain>AU 1054</strain>
    </source>
</reference>
<protein>
    <recommendedName>
        <fullName evidence="1">Large ribosomal subunit protein bL9</fullName>
    </recommendedName>
    <alternativeName>
        <fullName evidence="2">50S ribosomal protein L9</fullName>
    </alternativeName>
</protein>
<feature type="chain" id="PRO_0000258444" description="Large ribosomal subunit protein bL9">
    <location>
        <begin position="1"/>
        <end position="150"/>
    </location>
</feature>
<sequence>MQIILLEKVANLGNLGDIVKVKDGYARNFLIPNRKARRATKEAIAEFEVRRAELEKIAAEKLAASQAVGEKLNGQSFEITQKSGVDGRLFGSVTNGDVAELLKKAGYEVEKLQVRMPEGPLKMIGEHNVQVALHTDVVVDVTINVIGDHA</sequence>
<dbReference type="EMBL" id="CP000380">
    <property type="protein sequence ID" value="ABF81072.1"/>
    <property type="molecule type" value="Genomic_DNA"/>
</dbReference>
<dbReference type="SMR" id="Q1BH33"/>
<dbReference type="HOGENOM" id="CLU_078938_4_1_4"/>
<dbReference type="GO" id="GO:1990904">
    <property type="term" value="C:ribonucleoprotein complex"/>
    <property type="evidence" value="ECO:0007669"/>
    <property type="project" value="UniProtKB-KW"/>
</dbReference>
<dbReference type="GO" id="GO:0005840">
    <property type="term" value="C:ribosome"/>
    <property type="evidence" value="ECO:0007669"/>
    <property type="project" value="UniProtKB-KW"/>
</dbReference>
<dbReference type="GO" id="GO:0019843">
    <property type="term" value="F:rRNA binding"/>
    <property type="evidence" value="ECO:0007669"/>
    <property type="project" value="UniProtKB-UniRule"/>
</dbReference>
<dbReference type="GO" id="GO:0003735">
    <property type="term" value="F:structural constituent of ribosome"/>
    <property type="evidence" value="ECO:0007669"/>
    <property type="project" value="InterPro"/>
</dbReference>
<dbReference type="GO" id="GO:0006412">
    <property type="term" value="P:translation"/>
    <property type="evidence" value="ECO:0007669"/>
    <property type="project" value="UniProtKB-UniRule"/>
</dbReference>
<dbReference type="Gene3D" id="3.10.430.100">
    <property type="entry name" value="Ribosomal protein L9, C-terminal domain"/>
    <property type="match status" value="1"/>
</dbReference>
<dbReference type="Gene3D" id="3.40.5.10">
    <property type="entry name" value="Ribosomal protein L9, N-terminal domain"/>
    <property type="match status" value="1"/>
</dbReference>
<dbReference type="HAMAP" id="MF_00503">
    <property type="entry name" value="Ribosomal_bL9"/>
    <property type="match status" value="1"/>
</dbReference>
<dbReference type="InterPro" id="IPR000244">
    <property type="entry name" value="Ribosomal_bL9"/>
</dbReference>
<dbReference type="InterPro" id="IPR009027">
    <property type="entry name" value="Ribosomal_bL9/RNase_H1_N"/>
</dbReference>
<dbReference type="InterPro" id="IPR020594">
    <property type="entry name" value="Ribosomal_bL9_bac/chp"/>
</dbReference>
<dbReference type="InterPro" id="IPR020069">
    <property type="entry name" value="Ribosomal_bL9_C"/>
</dbReference>
<dbReference type="InterPro" id="IPR036791">
    <property type="entry name" value="Ribosomal_bL9_C_sf"/>
</dbReference>
<dbReference type="InterPro" id="IPR020070">
    <property type="entry name" value="Ribosomal_bL9_N"/>
</dbReference>
<dbReference type="InterPro" id="IPR036935">
    <property type="entry name" value="Ribosomal_bL9_N_sf"/>
</dbReference>
<dbReference type="NCBIfam" id="TIGR00158">
    <property type="entry name" value="L9"/>
    <property type="match status" value="1"/>
</dbReference>
<dbReference type="PANTHER" id="PTHR21368">
    <property type="entry name" value="50S RIBOSOMAL PROTEIN L9"/>
    <property type="match status" value="1"/>
</dbReference>
<dbReference type="Pfam" id="PF03948">
    <property type="entry name" value="Ribosomal_L9_C"/>
    <property type="match status" value="1"/>
</dbReference>
<dbReference type="Pfam" id="PF01281">
    <property type="entry name" value="Ribosomal_L9_N"/>
    <property type="match status" value="1"/>
</dbReference>
<dbReference type="SUPFAM" id="SSF55658">
    <property type="entry name" value="L9 N-domain-like"/>
    <property type="match status" value="1"/>
</dbReference>
<dbReference type="SUPFAM" id="SSF55653">
    <property type="entry name" value="Ribosomal protein L9 C-domain"/>
    <property type="match status" value="1"/>
</dbReference>
<dbReference type="PROSITE" id="PS00651">
    <property type="entry name" value="RIBOSOMAL_L9"/>
    <property type="match status" value="1"/>
</dbReference>